<organism>
    <name type="scientific">Prochlorococcus marinus (strain MIT 9313)</name>
    <dbReference type="NCBI Taxonomy" id="74547"/>
    <lineage>
        <taxon>Bacteria</taxon>
        <taxon>Bacillati</taxon>
        <taxon>Cyanobacteriota</taxon>
        <taxon>Cyanophyceae</taxon>
        <taxon>Synechococcales</taxon>
        <taxon>Prochlorococcaceae</taxon>
        <taxon>Prochlorococcus</taxon>
    </lineage>
</organism>
<proteinExistence type="inferred from homology"/>
<accession>Q7V4Q0</accession>
<comment type="function">
    <text evidence="1">One of the components of the core complex of photosystem II (PSII). PSII is a light-driven water:plastoquinone oxidoreductase that uses light energy to abstract electrons from H(2)O, generating O(2) and a proton gradient subsequently used for ATP formation. It consists of a core antenna complex that captures photons, and an electron transfer chain that converts photonic excitation into a charge separation. This subunit is found at the monomer-monomer interface and is required for correct PSII assembly and/or dimerization.</text>
</comment>
<comment type="subunit">
    <text evidence="2">PSII is composed of 1 copy each of membrane proteins PsbA, PsbB, PsbC, PsbD, PsbE, PsbF, PsbH, PsbI, PsbJ, PsbK, PsbL, PsbM, PsbT, PsbX, PsbY, Psb30/Ycf12, peripheral proteins PsbO, CyanoQ (PsbQ), PsbU, PsbV and a large number of cofactors. It forms dimeric complexes.</text>
</comment>
<comment type="subcellular location">
    <subcellularLocation>
        <location evidence="1">Cellular thylakoid membrane</location>
        <topology evidence="1">Single-pass membrane protein</topology>
    </subcellularLocation>
</comment>
<comment type="similarity">
    <text evidence="1">Belongs to the PsbL family.</text>
</comment>
<keyword id="KW-0472">Membrane</keyword>
<keyword id="KW-0602">Photosynthesis</keyword>
<keyword id="KW-0604">Photosystem II</keyword>
<keyword id="KW-0674">Reaction center</keyword>
<keyword id="KW-1185">Reference proteome</keyword>
<keyword id="KW-0793">Thylakoid</keyword>
<keyword id="KW-0812">Transmembrane</keyword>
<keyword id="KW-1133">Transmembrane helix</keyword>
<feature type="chain" id="PRO_0000219788" description="Photosystem II reaction center protein L">
    <location>
        <begin position="1"/>
        <end position="39"/>
    </location>
</feature>
<feature type="transmembrane region" description="Helical" evidence="1">
    <location>
        <begin position="18"/>
        <end position="38"/>
    </location>
</feature>
<name>PSBL_PROMM</name>
<evidence type="ECO:0000255" key="1">
    <source>
        <dbReference type="HAMAP-Rule" id="MF_01317"/>
    </source>
</evidence>
<evidence type="ECO:0000305" key="2"/>
<gene>
    <name evidence="1" type="primary">psbL</name>
    <name type="ordered locus">PMT_1898</name>
</gene>
<sequence>MEQNPNPNNLPAELNRTSLYLGLLLVFVTAVLFTSYFFN</sequence>
<dbReference type="EMBL" id="BX548175">
    <property type="protein sequence ID" value="CAE22073.1"/>
    <property type="molecule type" value="Genomic_DNA"/>
</dbReference>
<dbReference type="RefSeq" id="WP_011131264.1">
    <property type="nucleotide sequence ID" value="NC_005071.1"/>
</dbReference>
<dbReference type="SMR" id="Q7V4Q0"/>
<dbReference type="KEGG" id="pmt:PMT_1898"/>
<dbReference type="eggNOG" id="ENOG5033AKP">
    <property type="taxonomic scope" value="Bacteria"/>
</dbReference>
<dbReference type="HOGENOM" id="CLU_214425_0_0_3"/>
<dbReference type="Proteomes" id="UP000001423">
    <property type="component" value="Chromosome"/>
</dbReference>
<dbReference type="GO" id="GO:0009539">
    <property type="term" value="C:photosystem II reaction center"/>
    <property type="evidence" value="ECO:0007669"/>
    <property type="project" value="InterPro"/>
</dbReference>
<dbReference type="GO" id="GO:0031676">
    <property type="term" value="C:plasma membrane-derived thylakoid membrane"/>
    <property type="evidence" value="ECO:0007669"/>
    <property type="project" value="UniProtKB-SubCell"/>
</dbReference>
<dbReference type="GO" id="GO:0015979">
    <property type="term" value="P:photosynthesis"/>
    <property type="evidence" value="ECO:0007669"/>
    <property type="project" value="UniProtKB-UniRule"/>
</dbReference>
<dbReference type="HAMAP" id="MF_01317">
    <property type="entry name" value="PSII_PsbL"/>
    <property type="match status" value="1"/>
</dbReference>
<dbReference type="InterPro" id="IPR003372">
    <property type="entry name" value="PSII_PsbL"/>
</dbReference>
<dbReference type="InterPro" id="IPR037266">
    <property type="entry name" value="PSII_PsbL_sf"/>
</dbReference>
<dbReference type="NCBIfam" id="NF001972">
    <property type="entry name" value="PRK00753.1"/>
    <property type="match status" value="1"/>
</dbReference>
<dbReference type="Pfam" id="PF02419">
    <property type="entry name" value="PsbL"/>
    <property type="match status" value="1"/>
</dbReference>
<dbReference type="SUPFAM" id="SSF161017">
    <property type="entry name" value="Photosystem II reaction center protein L, PsbL"/>
    <property type="match status" value="1"/>
</dbReference>
<protein>
    <recommendedName>
        <fullName evidence="1">Photosystem II reaction center protein L</fullName>
        <shortName evidence="1">PSII-L</shortName>
    </recommendedName>
</protein>
<reference key="1">
    <citation type="journal article" date="2003" name="Nature">
        <title>Genome divergence in two Prochlorococcus ecotypes reflects oceanic niche differentiation.</title>
        <authorList>
            <person name="Rocap G."/>
            <person name="Larimer F.W."/>
            <person name="Lamerdin J.E."/>
            <person name="Malfatti S."/>
            <person name="Chain P."/>
            <person name="Ahlgren N.A."/>
            <person name="Arellano A."/>
            <person name="Coleman M."/>
            <person name="Hauser L."/>
            <person name="Hess W.R."/>
            <person name="Johnson Z.I."/>
            <person name="Land M.L."/>
            <person name="Lindell D."/>
            <person name="Post A.F."/>
            <person name="Regala W."/>
            <person name="Shah M."/>
            <person name="Shaw S.L."/>
            <person name="Steglich C."/>
            <person name="Sullivan M.B."/>
            <person name="Ting C.S."/>
            <person name="Tolonen A."/>
            <person name="Webb E.A."/>
            <person name="Zinser E.R."/>
            <person name="Chisholm S.W."/>
        </authorList>
    </citation>
    <scope>NUCLEOTIDE SEQUENCE [LARGE SCALE GENOMIC DNA]</scope>
    <source>
        <strain>MIT 9313</strain>
    </source>
</reference>